<evidence type="ECO:0000250" key="1"/>
<evidence type="ECO:0000255" key="2">
    <source>
        <dbReference type="PROSITE-ProRule" id="PRU01001"/>
    </source>
</evidence>
<evidence type="ECO:0000255" key="3">
    <source>
        <dbReference type="PROSITE-ProRule" id="PRU01002"/>
    </source>
</evidence>
<evidence type="ECO:0000256" key="4">
    <source>
        <dbReference type="SAM" id="MobiDB-lite"/>
    </source>
</evidence>
<evidence type="ECO:0000305" key="5"/>
<accession>Q6AWY3</accession>
<accession>B9FBC2</accession>
<accession>Q70KS3</accession>
<accession>Q851F4</accession>
<dbReference type="EMBL" id="AC120983">
    <property type="protein sequence ID" value="AAO38468.1"/>
    <property type="molecule type" value="Genomic_DNA"/>
</dbReference>
<dbReference type="EMBL" id="DP000009">
    <property type="protein sequence ID" value="ABF98682.1"/>
    <property type="status" value="ALT_INIT"/>
    <property type="molecule type" value="Genomic_DNA"/>
</dbReference>
<dbReference type="EMBL" id="AP008209">
    <property type="protein sequence ID" value="BAF13069.1"/>
    <property type="status" value="ALT_INIT"/>
    <property type="molecule type" value="Genomic_DNA"/>
</dbReference>
<dbReference type="EMBL" id="AP014959">
    <property type="status" value="NOT_ANNOTATED_CDS"/>
    <property type="molecule type" value="Genomic_DNA"/>
</dbReference>
<dbReference type="EMBL" id="CM000140">
    <property type="protein sequence ID" value="EEE59860.1"/>
    <property type="status" value="ALT_SEQ"/>
    <property type="molecule type" value="Genomic_DNA"/>
</dbReference>
<dbReference type="EMBL" id="AK073578">
    <property type="status" value="NOT_ANNOTATED_CDS"/>
    <property type="molecule type" value="mRNA"/>
</dbReference>
<dbReference type="EMBL" id="AJ575243">
    <property type="protein sequence ID" value="CAE00879.1"/>
    <property type="molecule type" value="mRNA"/>
</dbReference>
<dbReference type="EMBL" id="BK004861">
    <property type="protein sequence ID" value="DAA05210.1"/>
    <property type="status" value="ALT_INIT"/>
    <property type="molecule type" value="Genomic_DNA"/>
</dbReference>
<dbReference type="RefSeq" id="XP_015628630.1">
    <property type="nucleotide sequence ID" value="XM_015773144.1"/>
</dbReference>
<dbReference type="FunCoup" id="Q6AWY3">
    <property type="interactions" value="930"/>
</dbReference>
<dbReference type="STRING" id="39947.Q6AWY3"/>
<dbReference type="PaxDb" id="39947-Q6AWY3"/>
<dbReference type="KEGG" id="dosa:Os03g0729500"/>
<dbReference type="eggNOG" id="ENOG502QRK7">
    <property type="taxonomic scope" value="Eukaryota"/>
</dbReference>
<dbReference type="HOGENOM" id="CLU_038207_0_0_1"/>
<dbReference type="InParanoid" id="Q6AWY3"/>
<dbReference type="OrthoDB" id="1927209at2759"/>
<dbReference type="PlantReactome" id="R-OSA-9035605">
    <property type="pathway name" value="Regulation of seed size"/>
</dbReference>
<dbReference type="PlantReactome" id="R-OSA-9608575">
    <property type="pathway name" value="Reproductive meristem phase change"/>
</dbReference>
<dbReference type="Proteomes" id="UP000000763">
    <property type="component" value="Chromosome 3"/>
</dbReference>
<dbReference type="Proteomes" id="UP000007752">
    <property type="component" value="Chromosome 3"/>
</dbReference>
<dbReference type="Proteomes" id="UP000059680">
    <property type="component" value="Chromosome 3"/>
</dbReference>
<dbReference type="GO" id="GO:0005634">
    <property type="term" value="C:nucleus"/>
    <property type="evidence" value="ECO:0007669"/>
    <property type="project" value="UniProtKB-SubCell"/>
</dbReference>
<dbReference type="GO" id="GO:0005524">
    <property type="term" value="F:ATP binding"/>
    <property type="evidence" value="ECO:0007669"/>
    <property type="project" value="InterPro"/>
</dbReference>
<dbReference type="GO" id="GO:0032502">
    <property type="term" value="P:developmental process"/>
    <property type="evidence" value="ECO:0007669"/>
    <property type="project" value="InterPro"/>
</dbReference>
<dbReference type="GO" id="GO:0006351">
    <property type="term" value="P:DNA-templated transcription"/>
    <property type="evidence" value="ECO:0007669"/>
    <property type="project" value="InterPro"/>
</dbReference>
<dbReference type="GO" id="GO:0006355">
    <property type="term" value="P:regulation of DNA-templated transcription"/>
    <property type="evidence" value="ECO:0007669"/>
    <property type="project" value="InterPro"/>
</dbReference>
<dbReference type="InterPro" id="IPR014978">
    <property type="entry name" value="Gln-Leu-Gln_QLQ"/>
</dbReference>
<dbReference type="InterPro" id="IPR031137">
    <property type="entry name" value="GRF"/>
</dbReference>
<dbReference type="InterPro" id="IPR014977">
    <property type="entry name" value="WRC_dom"/>
</dbReference>
<dbReference type="PANTHER" id="PTHR31602:SF42">
    <property type="entry name" value="GROWTH-REGULATING FACTOR 2"/>
    <property type="match status" value="1"/>
</dbReference>
<dbReference type="PANTHER" id="PTHR31602">
    <property type="entry name" value="GROWTH-REGULATING FACTOR 5"/>
    <property type="match status" value="1"/>
</dbReference>
<dbReference type="Pfam" id="PF08880">
    <property type="entry name" value="QLQ"/>
    <property type="match status" value="1"/>
</dbReference>
<dbReference type="Pfam" id="PF08879">
    <property type="entry name" value="WRC"/>
    <property type="match status" value="1"/>
</dbReference>
<dbReference type="SMART" id="SM00951">
    <property type="entry name" value="QLQ"/>
    <property type="match status" value="1"/>
</dbReference>
<dbReference type="PROSITE" id="PS51666">
    <property type="entry name" value="QLQ"/>
    <property type="match status" value="1"/>
</dbReference>
<dbReference type="PROSITE" id="PS51667">
    <property type="entry name" value="WRC"/>
    <property type="match status" value="1"/>
</dbReference>
<name>GRF6_ORYSJ</name>
<proteinExistence type="evidence at transcript level"/>
<gene>
    <name type="primary">GRF6</name>
    <name type="ordered locus">Os03g0729500</name>
    <name type="ordered locus">LOC_Os03g51970</name>
    <name type="ORF">OsJ_12442</name>
    <name type="ORF">OSJNBb0011H13.8</name>
</gene>
<reference key="1">
    <citation type="journal article" date="2005" name="Genome Res.">
        <title>Sequence, annotation, and analysis of synteny between rice chromosome 3 and diverged grass species.</title>
        <authorList>
            <consortium name="The rice chromosome 3 sequencing consortium"/>
            <person name="Buell C.R."/>
            <person name="Yuan Q."/>
            <person name="Ouyang S."/>
            <person name="Liu J."/>
            <person name="Zhu W."/>
            <person name="Wang A."/>
            <person name="Maiti R."/>
            <person name="Haas B."/>
            <person name="Wortman J."/>
            <person name="Pertea M."/>
            <person name="Jones K.M."/>
            <person name="Kim M."/>
            <person name="Overton L."/>
            <person name="Tsitrin T."/>
            <person name="Fadrosh D."/>
            <person name="Bera J."/>
            <person name="Weaver B."/>
            <person name="Jin S."/>
            <person name="Johri S."/>
            <person name="Reardon M."/>
            <person name="Webb K."/>
            <person name="Hill J."/>
            <person name="Moffat K."/>
            <person name="Tallon L."/>
            <person name="Van Aken S."/>
            <person name="Lewis M."/>
            <person name="Utterback T."/>
            <person name="Feldblyum T."/>
            <person name="Zismann V."/>
            <person name="Iobst S."/>
            <person name="Hsiao J."/>
            <person name="de Vazeille A.R."/>
            <person name="Salzberg S.L."/>
            <person name="White O."/>
            <person name="Fraser C.M."/>
            <person name="Yu Y."/>
            <person name="Kim H."/>
            <person name="Rambo T."/>
            <person name="Currie J."/>
            <person name="Collura K."/>
            <person name="Kernodle-Thompson S."/>
            <person name="Wei F."/>
            <person name="Kudrna K."/>
            <person name="Ammiraju J.S.S."/>
            <person name="Luo M."/>
            <person name="Goicoechea J.L."/>
            <person name="Wing R.A."/>
            <person name="Henry D."/>
            <person name="Oates R."/>
            <person name="Palmer M."/>
            <person name="Pries G."/>
            <person name="Saski C."/>
            <person name="Simmons J."/>
            <person name="Soderlund C."/>
            <person name="Nelson W."/>
            <person name="de la Bastide M."/>
            <person name="Spiegel L."/>
            <person name="Nascimento L."/>
            <person name="Huang E."/>
            <person name="Preston R."/>
            <person name="Zutavern T."/>
            <person name="Palmer L."/>
            <person name="O'Shaughnessy A."/>
            <person name="Dike S."/>
            <person name="McCombie W.R."/>
            <person name="Minx P."/>
            <person name="Cordum H."/>
            <person name="Wilson R."/>
            <person name="Jin W."/>
            <person name="Lee H.R."/>
            <person name="Jiang J."/>
            <person name="Jackson S."/>
        </authorList>
    </citation>
    <scope>NUCLEOTIDE SEQUENCE [LARGE SCALE GENOMIC DNA]</scope>
    <source>
        <strain>cv. Nipponbare</strain>
    </source>
</reference>
<reference key="2">
    <citation type="journal article" date="2005" name="Nature">
        <title>The map-based sequence of the rice genome.</title>
        <authorList>
            <consortium name="International rice genome sequencing project (IRGSP)"/>
        </authorList>
    </citation>
    <scope>NUCLEOTIDE SEQUENCE [LARGE SCALE GENOMIC DNA]</scope>
    <source>
        <strain>cv. Nipponbare</strain>
    </source>
</reference>
<reference key="3">
    <citation type="journal article" date="2008" name="Nucleic Acids Res.">
        <title>The rice annotation project database (RAP-DB): 2008 update.</title>
        <authorList>
            <consortium name="The rice annotation project (RAP)"/>
        </authorList>
    </citation>
    <scope>GENOME REANNOTATION</scope>
    <source>
        <strain>cv. Nipponbare</strain>
    </source>
</reference>
<reference key="4">
    <citation type="journal article" date="2013" name="Rice">
        <title>Improvement of the Oryza sativa Nipponbare reference genome using next generation sequence and optical map data.</title>
        <authorList>
            <person name="Kawahara Y."/>
            <person name="de la Bastide M."/>
            <person name="Hamilton J.P."/>
            <person name="Kanamori H."/>
            <person name="McCombie W.R."/>
            <person name="Ouyang S."/>
            <person name="Schwartz D.C."/>
            <person name="Tanaka T."/>
            <person name="Wu J."/>
            <person name="Zhou S."/>
            <person name="Childs K.L."/>
            <person name="Davidson R.M."/>
            <person name="Lin H."/>
            <person name="Quesada-Ocampo L."/>
            <person name="Vaillancourt B."/>
            <person name="Sakai H."/>
            <person name="Lee S.S."/>
            <person name="Kim J."/>
            <person name="Numa H."/>
            <person name="Itoh T."/>
            <person name="Buell C.R."/>
            <person name="Matsumoto T."/>
        </authorList>
    </citation>
    <scope>GENOME REANNOTATION</scope>
    <source>
        <strain>cv. Nipponbare</strain>
    </source>
</reference>
<reference key="5">
    <citation type="journal article" date="2005" name="PLoS Biol.">
        <title>The genomes of Oryza sativa: a history of duplications.</title>
        <authorList>
            <person name="Yu J."/>
            <person name="Wang J."/>
            <person name="Lin W."/>
            <person name="Li S."/>
            <person name="Li H."/>
            <person name="Zhou J."/>
            <person name="Ni P."/>
            <person name="Dong W."/>
            <person name="Hu S."/>
            <person name="Zeng C."/>
            <person name="Zhang J."/>
            <person name="Zhang Y."/>
            <person name="Li R."/>
            <person name="Xu Z."/>
            <person name="Li S."/>
            <person name="Li X."/>
            <person name="Zheng H."/>
            <person name="Cong L."/>
            <person name="Lin L."/>
            <person name="Yin J."/>
            <person name="Geng J."/>
            <person name="Li G."/>
            <person name="Shi J."/>
            <person name="Liu J."/>
            <person name="Lv H."/>
            <person name="Li J."/>
            <person name="Wang J."/>
            <person name="Deng Y."/>
            <person name="Ran L."/>
            <person name="Shi X."/>
            <person name="Wang X."/>
            <person name="Wu Q."/>
            <person name="Li C."/>
            <person name="Ren X."/>
            <person name="Wang J."/>
            <person name="Wang X."/>
            <person name="Li D."/>
            <person name="Liu D."/>
            <person name="Zhang X."/>
            <person name="Ji Z."/>
            <person name="Zhao W."/>
            <person name="Sun Y."/>
            <person name="Zhang Z."/>
            <person name="Bao J."/>
            <person name="Han Y."/>
            <person name="Dong L."/>
            <person name="Ji J."/>
            <person name="Chen P."/>
            <person name="Wu S."/>
            <person name="Liu J."/>
            <person name="Xiao Y."/>
            <person name="Bu D."/>
            <person name="Tan J."/>
            <person name="Yang L."/>
            <person name="Ye C."/>
            <person name="Zhang J."/>
            <person name="Xu J."/>
            <person name="Zhou Y."/>
            <person name="Yu Y."/>
            <person name="Zhang B."/>
            <person name="Zhuang S."/>
            <person name="Wei H."/>
            <person name="Liu B."/>
            <person name="Lei M."/>
            <person name="Yu H."/>
            <person name="Li Y."/>
            <person name="Xu H."/>
            <person name="Wei S."/>
            <person name="He X."/>
            <person name="Fang L."/>
            <person name="Zhang Z."/>
            <person name="Zhang Y."/>
            <person name="Huang X."/>
            <person name="Su Z."/>
            <person name="Tong W."/>
            <person name="Li J."/>
            <person name="Tong Z."/>
            <person name="Li S."/>
            <person name="Ye J."/>
            <person name="Wang L."/>
            <person name="Fang L."/>
            <person name="Lei T."/>
            <person name="Chen C.-S."/>
            <person name="Chen H.-C."/>
            <person name="Xu Z."/>
            <person name="Li H."/>
            <person name="Huang H."/>
            <person name="Zhang F."/>
            <person name="Xu H."/>
            <person name="Li N."/>
            <person name="Zhao C."/>
            <person name="Li S."/>
            <person name="Dong L."/>
            <person name="Huang Y."/>
            <person name="Li L."/>
            <person name="Xi Y."/>
            <person name="Qi Q."/>
            <person name="Li W."/>
            <person name="Zhang B."/>
            <person name="Hu W."/>
            <person name="Zhang Y."/>
            <person name="Tian X."/>
            <person name="Jiao Y."/>
            <person name="Liang X."/>
            <person name="Jin J."/>
            <person name="Gao L."/>
            <person name="Zheng W."/>
            <person name="Hao B."/>
            <person name="Liu S.-M."/>
            <person name="Wang W."/>
            <person name="Yuan L."/>
            <person name="Cao M."/>
            <person name="McDermott J."/>
            <person name="Samudrala R."/>
            <person name="Wang J."/>
            <person name="Wong G.K.-S."/>
            <person name="Yang H."/>
        </authorList>
    </citation>
    <scope>NUCLEOTIDE SEQUENCE [LARGE SCALE GENOMIC DNA]</scope>
    <source>
        <strain>cv. Nipponbare</strain>
    </source>
</reference>
<reference key="6">
    <citation type="journal article" date="2003" name="Science">
        <title>Collection, mapping, and annotation of over 28,000 cDNA clones from japonica rice.</title>
        <authorList>
            <consortium name="The rice full-length cDNA consortium"/>
        </authorList>
    </citation>
    <scope>NUCLEOTIDE SEQUENCE [LARGE SCALE MRNA]</scope>
    <source>
        <strain>cv. Nipponbare</strain>
    </source>
</reference>
<reference key="7">
    <citation type="journal article" date="2004" name="Plant J.">
        <title>Development of an efficient method for the isolation of factors involved in gene transcription during rice embryo development.</title>
        <authorList>
            <person name="Ye R."/>
            <person name="Yao Q.-H."/>
            <person name="Xu Z.-H."/>
            <person name="Xue H.-W."/>
        </authorList>
    </citation>
    <scope>NUCLEOTIDE SEQUENCE [MRNA] OF 343-552</scope>
    <source>
        <strain>cv. Nipponbare</strain>
        <tissue>Embryo</tissue>
    </source>
</reference>
<reference key="8">
    <citation type="journal article" date="2004" name="Plant Cell Physiol.">
        <title>Whole genome analysis of the OsGRF gene family encoding plant-specific putative transcription activators in rice (Oryza sativa L.).</title>
        <authorList>
            <person name="Choi D."/>
            <person name="Kim J.H."/>
            <person name="Kende H."/>
        </authorList>
    </citation>
    <scope>IDENTIFICATION</scope>
    <scope>GENE FAMILY</scope>
    <source>
        <strain>cv. Nipponbare</strain>
    </source>
</reference>
<keyword id="KW-0010">Activator</keyword>
<keyword id="KW-0539">Nucleus</keyword>
<keyword id="KW-1185">Reference proteome</keyword>
<keyword id="KW-0804">Transcription</keyword>
<keyword id="KW-0805">Transcription regulation</keyword>
<organism>
    <name type="scientific">Oryza sativa subsp. japonica</name>
    <name type="common">Rice</name>
    <dbReference type="NCBI Taxonomy" id="39947"/>
    <lineage>
        <taxon>Eukaryota</taxon>
        <taxon>Viridiplantae</taxon>
        <taxon>Streptophyta</taxon>
        <taxon>Embryophyta</taxon>
        <taxon>Tracheophyta</taxon>
        <taxon>Spermatophyta</taxon>
        <taxon>Magnoliopsida</taxon>
        <taxon>Liliopsida</taxon>
        <taxon>Poales</taxon>
        <taxon>Poaceae</taxon>
        <taxon>BOP clade</taxon>
        <taxon>Oryzoideae</taxon>
        <taxon>Oryzeae</taxon>
        <taxon>Oryzinae</taxon>
        <taxon>Oryza</taxon>
        <taxon>Oryza sativa</taxon>
    </lineage>
</organism>
<feature type="chain" id="PRO_0000419307" description="Growth-regulating factor 6">
    <location>
        <begin position="1"/>
        <end position="603"/>
    </location>
</feature>
<feature type="domain" description="QLQ" evidence="2">
    <location>
        <begin position="158"/>
        <end position="193"/>
    </location>
</feature>
<feature type="domain" description="WRC" evidence="3">
    <location>
        <begin position="223"/>
        <end position="267"/>
    </location>
</feature>
<feature type="region of interest" description="Disordered" evidence="4">
    <location>
        <begin position="34"/>
        <end position="58"/>
    </location>
</feature>
<feature type="region of interest" description="Disordered" evidence="4">
    <location>
        <begin position="561"/>
        <end position="582"/>
    </location>
</feature>
<feature type="short sequence motif" description="Bipartite nuclear localization signal" evidence="3">
    <location>
        <begin position="228"/>
        <end position="238"/>
    </location>
</feature>
<feature type="short sequence motif" description="Bipartite nuclear localization signal" evidence="3">
    <location>
        <begin position="256"/>
        <end position="263"/>
    </location>
</feature>
<feature type="compositionally biased region" description="Low complexity" evidence="4">
    <location>
        <begin position="561"/>
        <end position="571"/>
    </location>
</feature>
<feature type="sequence conflict" description="In Ref. 6; AK073578." evidence="5" ref="6">
    <original>I</original>
    <variation>V</variation>
    <location>
        <position position="165"/>
    </location>
</feature>
<feature type="sequence conflict" description="In Ref. 7; CAE00879." evidence="5" ref="7">
    <original>V</original>
    <variation>G</variation>
    <location>
        <position position="518"/>
    </location>
</feature>
<comment type="function">
    <text evidence="1">Transcription activator that plays a regulatory role in gibberellin-induced stem elongation.</text>
</comment>
<comment type="subcellular location">
    <subcellularLocation>
        <location evidence="3">Nucleus</location>
    </subcellularLocation>
</comment>
<comment type="domain">
    <text>The QLQ domain and WRC domain may be involved in protein-protein interaction and DNA-binding, respectively.</text>
</comment>
<comment type="similarity">
    <text evidence="5">Belongs to the GRF family.</text>
</comment>
<comment type="sequence caution" evidence="5">
    <conflict type="erroneous initiation">
        <sequence resource="EMBL-CDS" id="ABF98682"/>
    </conflict>
    <text>Truncated N-terminus.</text>
</comment>
<comment type="sequence caution" evidence="5">
    <conflict type="erroneous initiation">
        <sequence resource="EMBL-CDS" id="BAF13069"/>
    </conflict>
    <text>Truncated N-terminus.</text>
</comment>
<comment type="sequence caution" evidence="5">
    <conflict type="erroneous initiation">
        <sequence resource="EMBL-CDS" id="DAA05210"/>
    </conflict>
    <text>Truncated N-terminus.</text>
</comment>
<comment type="sequence caution" evidence="5">
    <conflict type="erroneous gene model prediction">
        <sequence resource="EMBL-CDS" id="EEE59860"/>
    </conflict>
</comment>
<protein>
    <recommendedName>
        <fullName>Growth-regulating factor 6</fullName>
        <shortName>OsGRF6</shortName>
    </recommendedName>
    <alternativeName>
        <fullName>Transcription activator GRF6</fullName>
    </alternativeName>
</protein>
<sequence length="603" mass="62896">MDLGGGVGVVMAAVDGGGGGELGGGGLLGSRLMKHGRGNAGDQEHEWRPPAKQARGGDASSAAAAVAAAAAVSEAVKVAAPFLLGASCSPGHGGEQMLSFSSSASSCSSGGGGAAVAAAAAAGGAMPLYYGTPASCSGLSSVSLSSSMQGAMARVRGPFTPSQWIELEHQALIYKYLAANSPVPHSLLIPIRRSLTSPYSPAYFGSSTLGWGSFQLGYSGSADPEPGRCRRTDGKKWRCSRDAVADQKYCERHMNRGRHRSRKHVEGQPGHAAKAMPAAVAAAAASATQPSAPAAHSGGAVAGLAINHQHQQMKNYAANTANPCSLQYSRDLANKHNESEQVQDSDSLSMLTSISTRNTGSLFPFSKQHNPFEVSNSRPDFGLVSPDSLMSSPHSSLENVNLLTSQSLNEQQSSVSLQHFVDWPRTPAQGALAWPDAEDMQAQRSQLSISAPMASSDLSSASTSPIHEKLMLSPLKLSREYSPIGLGFAANRDEVNQGEANWMPMFRDSLMGGPLGEVLTKNNNMEARNCLSESLNLLNDGWDSSSGFDSSPVGVLQKTTFGSVSSSTGSSPRLENHSVYDGNSNLRDDLGSVVVNHPSIRLV</sequence>